<proteinExistence type="evidence at transcript level"/>
<comment type="function">
    <text evidence="2">Acts as an electrogenic sodium (Na(+)) and chloride (Cl-)-dependent sodium-coupled solute transporter, including transport of monocarboxylates (short-chain fatty acids including L-lactate, D-lactate, pyruvate, acetate, propionate, valerate and butyrate), mocarboxylate drugs (nicotinate, benzoate, salicylate and 5-aminosalicylate) and ketone bodies (beta-D-hydroxybutyrate, acetoacetate and alpha-ketoisocaproate), with a Na(+):substrate stoichiometry of between 4:1 and 2:1 (By similarity). Catalyzes passive carrier mediated diffusion of iodide. Mediates iodide transport from the thyrocyte into the colloid lumen through the apical membrane (By similarity). Mediates sodium-coupled electrogenic transport of pyroglutamate (5-oxo-L-proline) (By similarity). Can mediate the transport of chloride, bromide, iodide and nitrate ions when external concentration of sodium ions is reduced (By similarity).</text>
</comment>
<comment type="catalytic activity">
    <reaction evidence="2">
        <text>(S)-lactate(out) + 2 Na(+)(out) = (S)-lactate(in) + 2 Na(+)(in)</text>
        <dbReference type="Rhea" id="RHEA:72935"/>
        <dbReference type="ChEBI" id="CHEBI:16651"/>
        <dbReference type="ChEBI" id="CHEBI:29101"/>
    </reaction>
</comment>
<comment type="catalytic activity">
    <reaction evidence="2">
        <text>propanoate(out) + 2 Na(+)(out) = propanoate(in) + 2 Na(+)(in)</text>
        <dbReference type="Rhea" id="RHEA:72939"/>
        <dbReference type="ChEBI" id="CHEBI:17272"/>
        <dbReference type="ChEBI" id="CHEBI:29101"/>
    </reaction>
</comment>
<comment type="catalytic activity">
    <reaction evidence="2">
        <text>pyruvate(out) + 2 Na(+)(out) = pyruvate(in) + 2 Na(+)(in)</text>
        <dbReference type="Rhea" id="RHEA:72943"/>
        <dbReference type="ChEBI" id="CHEBI:15361"/>
        <dbReference type="ChEBI" id="CHEBI:29101"/>
    </reaction>
</comment>
<comment type="catalytic activity">
    <reaction evidence="2">
        <text>acetate(out) + 2 Na(+)(out) = acetate(in) + 2 Na(+)(in)</text>
        <dbReference type="Rhea" id="RHEA:72947"/>
        <dbReference type="ChEBI" id="CHEBI:29101"/>
        <dbReference type="ChEBI" id="CHEBI:30089"/>
    </reaction>
</comment>
<comment type="catalytic activity">
    <reaction evidence="2">
        <text>butanoate(out) + 2 Na(+)(out) = butanoate(in) + 2 Na(+)(in)</text>
        <dbReference type="Rhea" id="RHEA:72951"/>
        <dbReference type="ChEBI" id="CHEBI:17968"/>
        <dbReference type="ChEBI" id="CHEBI:29101"/>
    </reaction>
</comment>
<comment type="catalytic activity">
    <reaction evidence="2">
        <text>nicotinate(out) + 2 Na(+)(out) = nicotinate(in) + 2 Na(+)(in)</text>
        <dbReference type="Rhea" id="RHEA:72955"/>
        <dbReference type="ChEBI" id="CHEBI:29101"/>
        <dbReference type="ChEBI" id="CHEBI:32544"/>
    </reaction>
</comment>
<comment type="catalytic activity">
    <reaction evidence="2">
        <text>(R)-3-hydroxybutanoate(out) + 2 Na(+)(out) = (R)-3-hydroxybutanoate(in) + 2 Na(+)(in)</text>
        <dbReference type="Rhea" id="RHEA:72959"/>
        <dbReference type="ChEBI" id="CHEBI:10983"/>
        <dbReference type="ChEBI" id="CHEBI:29101"/>
    </reaction>
</comment>
<comment type="catalytic activity">
    <reaction evidence="2">
        <text>acetoacetate(out) + 2 Na(+)(out) = acetoacetate(in) + 2 Na(+)(in)</text>
        <dbReference type="Rhea" id="RHEA:72963"/>
        <dbReference type="ChEBI" id="CHEBI:13705"/>
        <dbReference type="ChEBI" id="CHEBI:29101"/>
    </reaction>
</comment>
<comment type="catalytic activity">
    <reaction evidence="1">
        <text>4-methyl-2-oxopentanoate(out) + 2 Na(+)(out) = 4-methyl-2-oxopentanoate(in) + 2 Na(+)(in)</text>
        <dbReference type="Rhea" id="RHEA:72967"/>
        <dbReference type="ChEBI" id="CHEBI:17865"/>
        <dbReference type="ChEBI" id="CHEBI:29101"/>
    </reaction>
</comment>
<comment type="catalytic activity">
    <reaction evidence="2">
        <text>5-oxo-L-proline(out) + 2 Na(+)(out) = 5-oxo-L-proline(in) + 2 Na(+)(in)</text>
        <dbReference type="Rhea" id="RHEA:72971"/>
        <dbReference type="ChEBI" id="CHEBI:29101"/>
        <dbReference type="ChEBI" id="CHEBI:58402"/>
    </reaction>
</comment>
<comment type="catalytic activity">
    <reaction evidence="2">
        <text>iodide(out) = iodide(in)</text>
        <dbReference type="Rhea" id="RHEA:66324"/>
        <dbReference type="ChEBI" id="CHEBI:16382"/>
    </reaction>
</comment>
<comment type="catalytic activity">
    <reaction evidence="2">
        <text>chloride(in) = chloride(out)</text>
        <dbReference type="Rhea" id="RHEA:29823"/>
        <dbReference type="ChEBI" id="CHEBI:17996"/>
    </reaction>
</comment>
<comment type="catalytic activity">
    <reaction evidence="2">
        <text>nitrate(in) = nitrate(out)</text>
        <dbReference type="Rhea" id="RHEA:34923"/>
        <dbReference type="ChEBI" id="CHEBI:17632"/>
    </reaction>
</comment>
<comment type="catalytic activity">
    <reaction evidence="2">
        <text>bromide(in) = bromide(out)</text>
        <dbReference type="Rhea" id="RHEA:75383"/>
        <dbReference type="ChEBI" id="CHEBI:15858"/>
    </reaction>
</comment>
<comment type="subcellular location">
    <subcellularLocation>
        <location evidence="2">Apical cell membrane</location>
        <topology evidence="3">Multi-pass membrane protein</topology>
    </subcellularLocation>
</comment>
<comment type="alternative products">
    <event type="alternative splicing"/>
    <isoform>
        <id>Q7SYH5-1</id>
        <name evidence="5">1</name>
        <name evidence="5">vito-a</name>
        <name evidence="5">vito-b</name>
        <sequence type="displayed"/>
    </isoform>
    <isoform>
        <id>Q7SYH5-2</id>
        <name evidence="5">2</name>
        <name evidence="5">vito-c</name>
        <sequence type="described" ref="VSP_052791 VSP_052792"/>
    </isoform>
</comment>
<comment type="tissue specificity">
    <text evidence="5">In the gastrula and neurula stages, expressed in the gastrula anterior endoderm and in the entire circumference of the blastopore lip superficial endoderm. At tailbud stages, abundant expression observed in the ventral midgut region. As development proceeds expression becomes restricted to the liver diverticulum and ultimately to the presumptive gallbladder, by tadpole stage 35. Also present in pronephros and the tip of the tail.</text>
</comment>
<comment type="similarity">
    <text evidence="3">Belongs to the sodium:solute symporter (SSF) (TC 2.A.21) family.</text>
</comment>
<organism>
    <name type="scientific">Xenopus laevis</name>
    <name type="common">African clawed frog</name>
    <dbReference type="NCBI Taxonomy" id="8355"/>
    <lineage>
        <taxon>Eukaryota</taxon>
        <taxon>Metazoa</taxon>
        <taxon>Chordata</taxon>
        <taxon>Craniata</taxon>
        <taxon>Vertebrata</taxon>
        <taxon>Euteleostomi</taxon>
        <taxon>Amphibia</taxon>
        <taxon>Batrachia</taxon>
        <taxon>Anura</taxon>
        <taxon>Pipoidea</taxon>
        <taxon>Pipidae</taxon>
        <taxon>Xenopodinae</taxon>
        <taxon>Xenopus</taxon>
        <taxon>Xenopus</taxon>
    </lineage>
</organism>
<keyword id="KW-0025">Alternative splicing</keyword>
<keyword id="KW-1003">Cell membrane</keyword>
<keyword id="KW-0325">Glycoprotein</keyword>
<keyword id="KW-0406">Ion transport</keyword>
<keyword id="KW-0472">Membrane</keyword>
<keyword id="KW-1185">Reference proteome</keyword>
<keyword id="KW-0915">Sodium</keyword>
<keyword id="KW-0739">Sodium transport</keyword>
<keyword id="KW-0769">Symport</keyword>
<keyword id="KW-0812">Transmembrane</keyword>
<keyword id="KW-1133">Transmembrane helix</keyword>
<keyword id="KW-0813">Transport</keyword>
<gene>
    <name evidence="7" type="primary">slc5a8</name>
    <name evidence="12" type="synonym">smcte</name>
    <name evidence="10" type="synonym">vito</name>
</gene>
<reference evidence="8 11" key="1">
    <citation type="journal article" date="2003" name="Gene Expr. Patterns">
        <title>Novel gene expression domains reveal early patterning of the Xenopus endoderm.</title>
        <authorList>
            <person name="Costa R.M.B."/>
            <person name="Mason J."/>
            <person name="Lee M."/>
            <person name="Amaya E."/>
            <person name="Zorn A.M."/>
        </authorList>
    </citation>
    <scope>NUCLEOTIDE SEQUENCE [MRNA] (ISOFORMS 1 AND 2)</scope>
    <scope>TISSUE SPECIFICITY</scope>
    <source>
        <tissue evidence="11">Midgut</tissue>
        <tissue evidence="11">Tail bud</tissue>
    </source>
</reference>
<reference evidence="8 12" key="2">
    <citation type="submission" date="2004-08" db="EMBL/GenBank/DDBJ databases">
        <title>Cloning and expression of the Xenopus electrogenic sodium monocarboxylate cotransporter, xSMCTe (Slc5A8).</title>
        <authorList>
            <person name="Plata C.M."/>
            <person name="Romero M.F."/>
        </authorList>
    </citation>
    <scope>NUCLEOTIDE SEQUENCE [MRNA] (ISOFORM 1)</scope>
</reference>
<reference evidence="8 12" key="3">
    <citation type="submission" date="2003-10" db="EMBL/GenBank/DDBJ databases">
        <authorList>
            <consortium name="NIH - Xenopus Gene Collection (XGC) project"/>
        </authorList>
    </citation>
    <scope>NUCLEOTIDE SEQUENCE [LARGE SCALE MRNA] (ISOFORM 1)</scope>
    <source>
        <tissue evidence="9">Kidney</tissue>
    </source>
</reference>
<accession>Q7SYH5</accession>
<accession>Q6PAX9</accession>
<accession>Q7SYH3</accession>
<accession>Q7SYH4</accession>
<protein>
    <recommendedName>
        <fullName>Sodium-coupled monocarboxylate transporter 1</fullName>
    </recommendedName>
    <alternativeName>
        <fullName>Electrogenic sodium monocarboxylate cotransporter</fullName>
        <shortName>xSMCTe</shortName>
    </alternativeName>
    <alternativeName>
        <fullName>Sodium solute transporter Vito</fullName>
    </alternativeName>
    <alternativeName>
        <fullName>Solute carrier family 5 member 8</fullName>
    </alternativeName>
</protein>
<evidence type="ECO:0000250" key="1">
    <source>
        <dbReference type="UniProtKB" id="Q8BYF6"/>
    </source>
</evidence>
<evidence type="ECO:0000250" key="2">
    <source>
        <dbReference type="UniProtKB" id="Q8N695"/>
    </source>
</evidence>
<evidence type="ECO:0000255" key="3"/>
<evidence type="ECO:0000256" key="4">
    <source>
        <dbReference type="SAM" id="MobiDB-lite"/>
    </source>
</evidence>
<evidence type="ECO:0000269" key="5">
    <source>
    </source>
</evidence>
<evidence type="ECO:0000303" key="6">
    <source>
    </source>
</evidence>
<evidence type="ECO:0000303" key="7">
    <source ref="2"/>
</evidence>
<evidence type="ECO:0000305" key="8"/>
<evidence type="ECO:0000312" key="9">
    <source>
        <dbReference type="EMBL" id="AAH60005.1"/>
    </source>
</evidence>
<evidence type="ECO:0000312" key="10">
    <source>
        <dbReference type="EMBL" id="AAP82285.1"/>
    </source>
</evidence>
<evidence type="ECO:0000312" key="11">
    <source>
        <dbReference type="EMBL" id="AAP82286.1"/>
    </source>
</evidence>
<evidence type="ECO:0000312" key="12">
    <source>
        <dbReference type="EMBL" id="AAW55813.1"/>
    </source>
</evidence>
<feature type="chain" id="PRO_0000334502" description="Sodium-coupled monocarboxylate transporter 1">
    <location>
        <begin position="1"/>
        <end position="622"/>
    </location>
</feature>
<feature type="topological domain" description="Extracellular" evidence="3">
    <location>
        <begin position="1"/>
        <end position="15"/>
    </location>
</feature>
<feature type="transmembrane region" description="Helical" evidence="3">
    <location>
        <begin position="16"/>
        <end position="36"/>
    </location>
</feature>
<feature type="topological domain" description="Cytoplasmic" evidence="3">
    <location>
        <begin position="37"/>
        <end position="51"/>
    </location>
</feature>
<feature type="transmembrane region" description="Helical" evidence="3">
    <location>
        <begin position="52"/>
        <end position="72"/>
    </location>
</feature>
<feature type="topological domain" description="Extracellular" evidence="3">
    <location>
        <begin position="73"/>
        <end position="83"/>
    </location>
</feature>
<feature type="transmembrane region" description="Helical" evidence="3">
    <location>
        <begin position="84"/>
        <end position="104"/>
    </location>
</feature>
<feature type="topological domain" description="Cytoplasmic" evidence="3">
    <location>
        <begin position="105"/>
        <end position="128"/>
    </location>
</feature>
<feature type="transmembrane region" description="Helical" evidence="3">
    <location>
        <begin position="129"/>
        <end position="149"/>
    </location>
</feature>
<feature type="topological domain" description="Extracellular" evidence="3">
    <location>
        <begin position="150"/>
        <end position="161"/>
    </location>
</feature>
<feature type="transmembrane region" description="Helical" evidence="3">
    <location>
        <begin position="162"/>
        <end position="182"/>
    </location>
</feature>
<feature type="topological domain" description="Cytoplasmic" evidence="3">
    <location>
        <begin position="183"/>
        <end position="184"/>
    </location>
</feature>
<feature type="transmembrane region" description="Helical" evidence="3">
    <location>
        <begin position="185"/>
        <end position="205"/>
    </location>
</feature>
<feature type="topological domain" description="Extracellular" evidence="3">
    <location>
        <begin position="206"/>
        <end position="241"/>
    </location>
</feature>
<feature type="transmembrane region" description="Helical" evidence="3">
    <location>
        <begin position="242"/>
        <end position="262"/>
    </location>
</feature>
<feature type="topological domain" description="Cytoplasmic" evidence="3">
    <location>
        <begin position="263"/>
        <end position="283"/>
    </location>
</feature>
<feature type="transmembrane region" description="Helical" evidence="3">
    <location>
        <begin position="284"/>
        <end position="304"/>
    </location>
</feature>
<feature type="topological domain" description="Extracellular" evidence="3">
    <location>
        <begin position="305"/>
        <end position="336"/>
    </location>
</feature>
<feature type="transmembrane region" description="Helical" evidence="3">
    <location>
        <begin position="337"/>
        <end position="357"/>
    </location>
</feature>
<feature type="topological domain" description="Cytoplasmic" evidence="3">
    <location>
        <begin position="358"/>
        <end position="389"/>
    </location>
</feature>
<feature type="transmembrane region" description="Helical" evidence="3">
    <location>
        <begin position="390"/>
        <end position="410"/>
    </location>
</feature>
<feature type="topological domain" description="Extracellular" evidence="3">
    <location>
        <begin position="411"/>
        <end position="415"/>
    </location>
</feature>
<feature type="transmembrane region" description="Helical" evidence="3">
    <location>
        <begin position="416"/>
        <end position="436"/>
    </location>
</feature>
<feature type="topological domain" description="Cytoplasmic" evidence="3">
    <location>
        <begin position="437"/>
        <end position="438"/>
    </location>
</feature>
<feature type="transmembrane region" description="Helical" evidence="3">
    <location>
        <begin position="439"/>
        <end position="459"/>
    </location>
</feature>
<feature type="topological domain" description="Extracellular" evidence="3">
    <location>
        <begin position="460"/>
        <end position="521"/>
    </location>
</feature>
<feature type="transmembrane region" description="Helical" evidence="3">
    <location>
        <begin position="522"/>
        <end position="542"/>
    </location>
</feature>
<feature type="topological domain" description="Cytoplasmic" evidence="3">
    <location>
        <begin position="543"/>
        <end position="622"/>
    </location>
</feature>
<feature type="region of interest" description="Disordered" evidence="4">
    <location>
        <begin position="591"/>
        <end position="622"/>
    </location>
</feature>
<feature type="compositionally biased region" description="Polar residues" evidence="4">
    <location>
        <begin position="595"/>
        <end position="609"/>
    </location>
</feature>
<feature type="glycosylation site" description="N-linked (GlcNAc...) asparagine" evidence="3">
    <location>
        <position position="219"/>
    </location>
</feature>
<feature type="glycosylation site" description="N-linked (GlcNAc...) asparagine" evidence="3">
    <location>
        <position position="481"/>
    </location>
</feature>
<feature type="glycosylation site" description="N-linked (GlcNAc...) asparagine" evidence="3">
    <location>
        <position position="488"/>
    </location>
</feature>
<feature type="splice variant" id="VSP_052791" description="In isoform 2." evidence="6">
    <original>SLLYGAICIGMAGI</original>
    <variation>TPPAGHFLTSLTTK</variation>
    <location>
        <begin position="389"/>
        <end position="402"/>
    </location>
</feature>
<feature type="splice variant" id="VSP_052792" description="In isoform 2." evidence="6">
    <location>
        <begin position="403"/>
        <end position="622"/>
    </location>
</feature>
<feature type="sequence conflict" description="In Ref. 1; AAP82286." evidence="8" ref="1">
    <original>I</original>
    <variation>V</variation>
    <location>
        <position position="285"/>
    </location>
</feature>
<feature type="sequence conflict" description="In Ref. 1; AAP82287." evidence="8" ref="1">
    <original>A</original>
    <variation>P</variation>
    <location>
        <position position="300"/>
    </location>
</feature>
<feature type="sequence conflict" description="In Ref. 1; AAP82286." evidence="8" ref="1">
    <original>I</original>
    <variation>L</variation>
    <location>
        <position position="402"/>
    </location>
</feature>
<feature type="sequence conflict" description="In Ref. 2; AAW55813 and 3; AAH60005." evidence="8" ref="2 3">
    <location>
        <position position="576"/>
    </location>
</feature>
<dbReference type="EMBL" id="AY260728">
    <property type="protein sequence ID" value="AAP82285.1"/>
    <property type="molecule type" value="mRNA"/>
</dbReference>
<dbReference type="EMBL" id="AY260729">
    <property type="protein sequence ID" value="AAP82286.1"/>
    <property type="molecule type" value="mRNA"/>
</dbReference>
<dbReference type="EMBL" id="AY260730">
    <property type="protein sequence ID" value="AAP82287.1"/>
    <property type="molecule type" value="mRNA"/>
</dbReference>
<dbReference type="EMBL" id="AY727861">
    <property type="protein sequence ID" value="AAW55813.1"/>
    <property type="molecule type" value="mRNA"/>
</dbReference>
<dbReference type="EMBL" id="BC060005">
    <property type="protein sequence ID" value="AAH60005.1"/>
    <property type="molecule type" value="mRNA"/>
</dbReference>
<dbReference type="RefSeq" id="NP_001084454.1">
    <molecule id="Q7SYH5-1"/>
    <property type="nucleotide sequence ID" value="NM_001090985.1"/>
</dbReference>
<dbReference type="SMR" id="Q7SYH5"/>
<dbReference type="GlyCosmos" id="Q7SYH5">
    <property type="glycosylation" value="3 sites, No reported glycans"/>
</dbReference>
<dbReference type="DNASU" id="403396"/>
<dbReference type="GeneID" id="403396"/>
<dbReference type="KEGG" id="xla:403396"/>
<dbReference type="AGR" id="Xenbase:XB-GENE-865289"/>
<dbReference type="CTD" id="403396"/>
<dbReference type="Xenbase" id="XB-GENE-865289">
    <property type="gene designation" value="slc5a8.L"/>
</dbReference>
<dbReference type="OrthoDB" id="6132759at2759"/>
<dbReference type="Proteomes" id="UP000186698">
    <property type="component" value="Chromosome 3L"/>
</dbReference>
<dbReference type="Bgee" id="403396">
    <property type="expression patterns" value="Expressed in intestine and 9 other cell types or tissues"/>
</dbReference>
<dbReference type="GO" id="GO:0016324">
    <property type="term" value="C:apical plasma membrane"/>
    <property type="evidence" value="ECO:0007669"/>
    <property type="project" value="UniProtKB-SubCell"/>
</dbReference>
<dbReference type="GO" id="GO:0070062">
    <property type="term" value="C:extracellular exosome"/>
    <property type="evidence" value="ECO:0007669"/>
    <property type="project" value="TreeGrafter"/>
</dbReference>
<dbReference type="GO" id="GO:0140161">
    <property type="term" value="F:monocarboxylate:sodium symporter activity"/>
    <property type="evidence" value="ECO:0000250"/>
    <property type="project" value="UniProtKB"/>
</dbReference>
<dbReference type="GO" id="GO:0005343">
    <property type="term" value="F:organic acid:sodium symporter activity"/>
    <property type="evidence" value="ECO:0000318"/>
    <property type="project" value="GO_Central"/>
</dbReference>
<dbReference type="GO" id="GO:0006846">
    <property type="term" value="P:acetate transport"/>
    <property type="evidence" value="ECO:0000250"/>
    <property type="project" value="UniProtKB"/>
</dbReference>
<dbReference type="GO" id="GO:0006821">
    <property type="term" value="P:chloride transport"/>
    <property type="evidence" value="ECO:0000250"/>
    <property type="project" value="UniProtKB"/>
</dbReference>
<dbReference type="GO" id="GO:0015705">
    <property type="term" value="P:iodide transport"/>
    <property type="evidence" value="ECO:0000250"/>
    <property type="project" value="UniProtKB"/>
</dbReference>
<dbReference type="GO" id="GO:0015727">
    <property type="term" value="P:lactate transport"/>
    <property type="evidence" value="ECO:0000250"/>
    <property type="project" value="UniProtKB"/>
</dbReference>
<dbReference type="GO" id="GO:2001142">
    <property type="term" value="P:nicotinate transport"/>
    <property type="evidence" value="ECO:0000250"/>
    <property type="project" value="UniProtKB"/>
</dbReference>
<dbReference type="GO" id="GO:0015706">
    <property type="term" value="P:nitrate transmembrane transport"/>
    <property type="evidence" value="ECO:0000250"/>
    <property type="project" value="UniProtKB"/>
</dbReference>
<dbReference type="GO" id="GO:0015730">
    <property type="term" value="P:propanoate transmembrane transport"/>
    <property type="evidence" value="ECO:0000250"/>
    <property type="project" value="UniProtKB"/>
</dbReference>
<dbReference type="GO" id="GO:0006848">
    <property type="term" value="P:pyruvate transport"/>
    <property type="evidence" value="ECO:0000250"/>
    <property type="project" value="UniProtKB"/>
</dbReference>
<dbReference type="GO" id="GO:0006814">
    <property type="term" value="P:sodium ion transport"/>
    <property type="evidence" value="ECO:0000318"/>
    <property type="project" value="GO_Central"/>
</dbReference>
<dbReference type="CDD" id="cd11519">
    <property type="entry name" value="SLC5sbd_SMCT1"/>
    <property type="match status" value="1"/>
</dbReference>
<dbReference type="FunFam" id="1.20.1730.10:FF:000007">
    <property type="entry name" value="Sodium-coupled monocarboxylate transporter 2"/>
    <property type="match status" value="1"/>
</dbReference>
<dbReference type="Gene3D" id="1.20.1730.10">
    <property type="entry name" value="Sodium/glucose cotransporter"/>
    <property type="match status" value="1"/>
</dbReference>
<dbReference type="InterPro" id="IPR038377">
    <property type="entry name" value="Na/Glc_symporter_sf"/>
</dbReference>
<dbReference type="InterPro" id="IPR001734">
    <property type="entry name" value="Na/solute_symporter"/>
</dbReference>
<dbReference type="InterPro" id="IPR041992">
    <property type="entry name" value="SLC5sbd_SMCT1"/>
</dbReference>
<dbReference type="InterPro" id="IPR051163">
    <property type="entry name" value="Sodium:Solute_Symporter_SSF"/>
</dbReference>
<dbReference type="NCBIfam" id="TIGR00813">
    <property type="entry name" value="sss"/>
    <property type="match status" value="1"/>
</dbReference>
<dbReference type="PANTHER" id="PTHR42985">
    <property type="entry name" value="SODIUM-COUPLED MONOCARBOXYLATE TRANSPORTER"/>
    <property type="match status" value="1"/>
</dbReference>
<dbReference type="PANTHER" id="PTHR42985:SF10">
    <property type="entry name" value="SODIUM-COUPLED MONOCARBOXYLATE TRANSPORTER 1"/>
    <property type="match status" value="1"/>
</dbReference>
<dbReference type="Pfam" id="PF00474">
    <property type="entry name" value="SSF"/>
    <property type="match status" value="1"/>
</dbReference>
<dbReference type="PROSITE" id="PS50283">
    <property type="entry name" value="NA_SOLUT_SYMP_3"/>
    <property type="match status" value="1"/>
</dbReference>
<name>SC5A8_XENLA</name>
<sequence>MVTPGNIGSFTVWDYLVFALMLLISAVIGIYYAFAGGGQKTSKDFLMGGRSMTAVPVALSLTASFMSAVTVLGTPAEVYRFGAMFIIFAFSYTIVVIISSEVFLPVFYRLGITSTYEYLELRFNKFVRLLGTILFIIQTVLYTGIVIYAPALALNQVTGFDLWGAVVATGVVCTFYCTMGGLKAVVWTDVFQVGIMVAGFTSVIIRAVVVQGGIGPILNDSYYGDRLNFWDFDPNPLKRHTFWTIVVGGTFTWTGIYGVNQAQVQRYIACKTRFQAKMSLYVNLIGLWAILACAVLSGLAMYSIYKDCDPWTAKFVSAPDQLMPYLALDILRDYPGLPGLFVSCAYSGTLSTVSSSINALAAVTVEDLIKPYIRSLSEKKMSWISKGTSLLYGAICIGMAGIASLMGGLLQAALSIFGMVGGPLLGLFSLGILFPFVNSLGAVIGLLSGFAISLWVGIGSQIYAPSPSSSLPKPLSLEGCNFTSIESNWTSTVMPMMTTLIPETQVSSRPELADSWYSLSYLYFSTIGTIVAVLVGVIVSLLSGGLKQNVNREFLLTSEDFSYLNVLFSPCKEKGQEEKVEVLNWKARRTDNDMEQGTDNPAFNNMEMTSTEKGEKTNGITA</sequence>